<name>PDC3_ORYSI</name>
<keyword id="KW-0210">Decarboxylase</keyword>
<keyword id="KW-0456">Lyase</keyword>
<keyword id="KW-0460">Magnesium</keyword>
<keyword id="KW-0479">Metal-binding</keyword>
<keyword id="KW-1185">Reference proteome</keyword>
<keyword id="KW-0786">Thiamine pyrophosphate</keyword>
<evidence type="ECO:0000250" key="1"/>
<evidence type="ECO:0000305" key="2"/>
<dbReference type="EC" id="4.1.1.1"/>
<dbReference type="EMBL" id="U07338">
    <property type="protein sequence ID" value="AAA68289.1"/>
    <property type="status" value="ALT_SEQ"/>
    <property type="molecule type" value="Genomic_DNA"/>
</dbReference>
<dbReference type="EMBL" id="CM000132">
    <property type="status" value="NOT_ANNOTATED_CDS"/>
    <property type="molecule type" value="Genomic_DNA"/>
</dbReference>
<dbReference type="PIR" id="T03252">
    <property type="entry name" value="T03252"/>
</dbReference>
<dbReference type="SMR" id="A2YQ76"/>
<dbReference type="STRING" id="39946.A2YQ76"/>
<dbReference type="EnsemblPlants" id="OsGoSa_07g0028530.01">
    <property type="protein sequence ID" value="OsGoSa_07g0028530.01"/>
    <property type="gene ID" value="OsGoSa_07g0028530"/>
</dbReference>
<dbReference type="EnsemblPlants" id="OsIR64_07g0029110.01">
    <property type="protein sequence ID" value="OsIR64_07g0029110.01"/>
    <property type="gene ID" value="OsIR64_07g0029110"/>
</dbReference>
<dbReference type="EnsemblPlants" id="OsKYG_07g0028850.01">
    <property type="protein sequence ID" value="OsKYG_07g0028850.01"/>
    <property type="gene ID" value="OsKYG_07g0028850"/>
</dbReference>
<dbReference type="EnsemblPlants" id="OsLaMu_07g0028450.01">
    <property type="protein sequence ID" value="OsLaMu_07g0028450.01"/>
    <property type="gene ID" value="OsLaMu_07g0028450"/>
</dbReference>
<dbReference type="EnsemblPlants" id="OsLiXu_07g0028880.01">
    <property type="protein sequence ID" value="OsLiXu_07g0028880.01"/>
    <property type="gene ID" value="OsLiXu_07g0028880"/>
</dbReference>
<dbReference type="EnsemblPlants" id="OsMH63_07G028500_01">
    <property type="protein sequence ID" value="OsMH63_07G028500_01"/>
    <property type="gene ID" value="OsMH63_07G028500"/>
</dbReference>
<dbReference type="EnsemblPlants" id="OsZS97_07G028220_01">
    <property type="protein sequence ID" value="OsZS97_07G028220_01"/>
    <property type="gene ID" value="OsZS97_07G028220"/>
</dbReference>
<dbReference type="Gramene" id="OsGoSa_07g0028530.01">
    <property type="protein sequence ID" value="OsGoSa_07g0028530.01"/>
    <property type="gene ID" value="OsGoSa_07g0028530"/>
</dbReference>
<dbReference type="Gramene" id="OsIR64_07g0029110.01">
    <property type="protein sequence ID" value="OsIR64_07g0029110.01"/>
    <property type="gene ID" value="OsIR64_07g0029110"/>
</dbReference>
<dbReference type="Gramene" id="OsKYG_07g0028850.01">
    <property type="protein sequence ID" value="OsKYG_07g0028850.01"/>
    <property type="gene ID" value="OsKYG_07g0028850"/>
</dbReference>
<dbReference type="Gramene" id="OsLaMu_07g0028450.01">
    <property type="protein sequence ID" value="OsLaMu_07g0028450.01"/>
    <property type="gene ID" value="OsLaMu_07g0028450"/>
</dbReference>
<dbReference type="Gramene" id="OsLiXu_07g0028880.01">
    <property type="protein sequence ID" value="OsLiXu_07g0028880.01"/>
    <property type="gene ID" value="OsLiXu_07g0028880"/>
</dbReference>
<dbReference type="Gramene" id="OsMH63_07G028500_01">
    <property type="protein sequence ID" value="OsMH63_07G028500_01"/>
    <property type="gene ID" value="OsMH63_07G028500"/>
</dbReference>
<dbReference type="Gramene" id="OsZS97_07G028220_01">
    <property type="protein sequence ID" value="OsZS97_07G028220_01"/>
    <property type="gene ID" value="OsZS97_07G028220"/>
</dbReference>
<dbReference type="OrthoDB" id="3970464at2759"/>
<dbReference type="Proteomes" id="UP000007015">
    <property type="component" value="Chromosome 7"/>
</dbReference>
<dbReference type="GO" id="GO:0005829">
    <property type="term" value="C:cytosol"/>
    <property type="evidence" value="ECO:0007669"/>
    <property type="project" value="TreeGrafter"/>
</dbReference>
<dbReference type="GO" id="GO:0000287">
    <property type="term" value="F:magnesium ion binding"/>
    <property type="evidence" value="ECO:0007669"/>
    <property type="project" value="InterPro"/>
</dbReference>
<dbReference type="GO" id="GO:0004737">
    <property type="term" value="F:pyruvate decarboxylase activity"/>
    <property type="evidence" value="ECO:0007669"/>
    <property type="project" value="UniProtKB-EC"/>
</dbReference>
<dbReference type="GO" id="GO:0030976">
    <property type="term" value="F:thiamine pyrophosphate binding"/>
    <property type="evidence" value="ECO:0007669"/>
    <property type="project" value="InterPro"/>
</dbReference>
<dbReference type="GO" id="GO:0000949">
    <property type="term" value="P:aromatic amino acid family catabolic process to alcohol via Ehrlich pathway"/>
    <property type="evidence" value="ECO:0007669"/>
    <property type="project" value="TreeGrafter"/>
</dbReference>
<dbReference type="CDD" id="cd02005">
    <property type="entry name" value="TPP_PDC_IPDC"/>
    <property type="match status" value="1"/>
</dbReference>
<dbReference type="CDD" id="cd07038">
    <property type="entry name" value="TPP_PYR_PDC_IPDC_like"/>
    <property type="match status" value="1"/>
</dbReference>
<dbReference type="FunFam" id="3.40.50.1220:FF:000009">
    <property type="entry name" value="Pyruvate decarboxylase 1"/>
    <property type="match status" value="1"/>
</dbReference>
<dbReference type="FunFam" id="3.40.50.970:FF:000021">
    <property type="entry name" value="Pyruvate decarboxylase 1"/>
    <property type="match status" value="1"/>
</dbReference>
<dbReference type="FunFam" id="3.40.50.970:FF:000017">
    <property type="entry name" value="pyruvate decarboxylase 1"/>
    <property type="match status" value="1"/>
</dbReference>
<dbReference type="Gene3D" id="3.40.50.970">
    <property type="match status" value="2"/>
</dbReference>
<dbReference type="Gene3D" id="3.40.50.1220">
    <property type="entry name" value="TPP-binding domain"/>
    <property type="match status" value="1"/>
</dbReference>
<dbReference type="InterPro" id="IPR029035">
    <property type="entry name" value="DHS-like_NAD/FAD-binding_dom"/>
</dbReference>
<dbReference type="InterPro" id="IPR012110">
    <property type="entry name" value="PDC/IPDC-like"/>
</dbReference>
<dbReference type="InterPro" id="IPR029061">
    <property type="entry name" value="THDP-binding"/>
</dbReference>
<dbReference type="InterPro" id="IPR012000">
    <property type="entry name" value="Thiamin_PyroP_enz_cen_dom"/>
</dbReference>
<dbReference type="InterPro" id="IPR012001">
    <property type="entry name" value="Thiamin_PyroP_enz_TPP-bd_dom"/>
</dbReference>
<dbReference type="InterPro" id="IPR011766">
    <property type="entry name" value="TPP_enzyme_TPP-bd"/>
</dbReference>
<dbReference type="InterPro" id="IPR047214">
    <property type="entry name" value="TPP_PDC_IPDC"/>
</dbReference>
<dbReference type="InterPro" id="IPR047213">
    <property type="entry name" value="TPP_PYR_PDC_IPDC-like"/>
</dbReference>
<dbReference type="PANTHER" id="PTHR43452">
    <property type="entry name" value="PYRUVATE DECARBOXYLASE"/>
    <property type="match status" value="1"/>
</dbReference>
<dbReference type="PANTHER" id="PTHR43452:SF5">
    <property type="entry name" value="PYRUVATE DECARBOXYLASE 3"/>
    <property type="match status" value="1"/>
</dbReference>
<dbReference type="Pfam" id="PF02775">
    <property type="entry name" value="TPP_enzyme_C"/>
    <property type="match status" value="1"/>
</dbReference>
<dbReference type="Pfam" id="PF00205">
    <property type="entry name" value="TPP_enzyme_M"/>
    <property type="match status" value="1"/>
</dbReference>
<dbReference type="Pfam" id="PF02776">
    <property type="entry name" value="TPP_enzyme_N"/>
    <property type="match status" value="1"/>
</dbReference>
<dbReference type="PIRSF" id="PIRSF036565">
    <property type="entry name" value="Pyruvt_ip_decrb"/>
    <property type="match status" value="1"/>
</dbReference>
<dbReference type="SUPFAM" id="SSF52467">
    <property type="entry name" value="DHS-like NAD/FAD-binding domain"/>
    <property type="match status" value="1"/>
</dbReference>
<dbReference type="SUPFAM" id="SSF52518">
    <property type="entry name" value="Thiamin diphosphate-binding fold (THDP-binding)"/>
    <property type="match status" value="2"/>
</dbReference>
<gene>
    <name type="primary">PDC3</name>
    <name type="ORF">OsI_026469</name>
</gene>
<accession>A2YQ76</accession>
<accession>P51849</accession>
<accession>Q84NP9</accession>
<sequence length="587" mass="62638">MESNGGGGGSPKEAAVVVPSSGDATLGGHLARRLVQVGVSDVFAVPGDFNLTLLDHLIAEPGLRVVGCCNELNAGYAADGYARARGVGACAVTFTVGGLSVLNAIGGAYSENLPLICIVGGPNSNDYGTNRILHHTIGLPDFSQELRCFQPLTCYQAVVNNLDDAHDQIDRAISTAIRESKPVYISVSCNLPAVPHPTFSRDPVPYFLSPRLSNQASLHAALDATLAFLDKAVKPVLVAGPKLRVAKAGGAFVDLADASGYAVAAMPSAKGLVPETLPRFIGTYWGAVSTAFCAEIVESADAYLFAGPIFNDYSSVGYSCLLKKEKAVVVQPDRVTVGNGPAFGCVMMRDFLSELAKRVRKNTTAFDNYKRIFVPEGQLPECEAGEALRVNVLFKHIQRMIGGAEIGAVMAETGDSWFNCQKLRLPEGCGYEFQMQYGSIGWSVGALLGYAQAVQKRVVACIGDGSFQVTAQDVSTMLRCGQRSIIFLINNGGYTIEVEIHDGPYNVIKNWDYVGLVNAIHNGEGRCWATRVRCEEELEAAIATATGDKADSLCFIEVVAHKDDTSKELLEWGSRVSAANSRPPNPQ</sequence>
<protein>
    <recommendedName>
        <fullName>Pyruvate decarboxylase 3</fullName>
        <shortName>PDC</shortName>
        <ecNumber>4.1.1.1</ecNumber>
    </recommendedName>
</protein>
<organism>
    <name type="scientific">Oryza sativa subsp. indica</name>
    <name type="common">Rice</name>
    <dbReference type="NCBI Taxonomy" id="39946"/>
    <lineage>
        <taxon>Eukaryota</taxon>
        <taxon>Viridiplantae</taxon>
        <taxon>Streptophyta</taxon>
        <taxon>Embryophyta</taxon>
        <taxon>Tracheophyta</taxon>
        <taxon>Spermatophyta</taxon>
        <taxon>Magnoliopsida</taxon>
        <taxon>Liliopsida</taxon>
        <taxon>Poales</taxon>
        <taxon>Poaceae</taxon>
        <taxon>BOP clade</taxon>
        <taxon>Oryzoideae</taxon>
        <taxon>Oryzeae</taxon>
        <taxon>Oryzinae</taxon>
        <taxon>Oryza</taxon>
        <taxon>Oryza sativa</taxon>
    </lineage>
</organism>
<proteinExistence type="inferred from homology"/>
<comment type="catalytic activity">
    <reaction>
        <text>a 2-oxocarboxylate + H(+) = an aldehyde + CO2</text>
        <dbReference type="Rhea" id="RHEA:11628"/>
        <dbReference type="ChEBI" id="CHEBI:15378"/>
        <dbReference type="ChEBI" id="CHEBI:16526"/>
        <dbReference type="ChEBI" id="CHEBI:17478"/>
        <dbReference type="ChEBI" id="CHEBI:35179"/>
        <dbReference type="EC" id="4.1.1.1"/>
    </reaction>
</comment>
<comment type="cofactor">
    <cofactor>
        <name>a metal cation</name>
        <dbReference type="ChEBI" id="CHEBI:25213"/>
    </cofactor>
    <text>Binds 1 metal ion per subunit.</text>
</comment>
<comment type="cofactor">
    <cofactor>
        <name>thiamine diphosphate</name>
        <dbReference type="ChEBI" id="CHEBI:58937"/>
    </cofactor>
    <text>Binds 1 thiamine pyrophosphate per subunit.</text>
</comment>
<comment type="subunit">
    <text evidence="2">Homotetramer.</text>
</comment>
<comment type="similarity">
    <text evidence="2">Belongs to the TPP enzyme family.</text>
</comment>
<comment type="sequence caution" evidence="2">
    <conflict type="frameshift">
        <sequence resource="EMBL-CDS" id="AAA68289"/>
    </conflict>
</comment>
<comment type="sequence caution" evidence="2">
    <conflict type="miscellaneous discrepancy">
        <sequence resource="EMBL-CDS" id="AAA68289"/>
    </conflict>
    <text>Sequencing errors.</text>
</comment>
<feature type="chain" id="PRO_0000303669" description="Pyruvate decarboxylase 3">
    <location>
        <begin position="1"/>
        <end position="587"/>
    </location>
</feature>
<feature type="region of interest" description="Thiamine pyrophosphate binding">
    <location>
        <begin position="415"/>
        <end position="496"/>
    </location>
</feature>
<feature type="binding site" evidence="1">
    <location>
        <position position="48"/>
    </location>
    <ligand>
        <name>substrate</name>
    </ligand>
</feature>
<feature type="binding site" evidence="1">
    <location>
        <position position="135"/>
    </location>
    <ligand>
        <name>substrate</name>
    </ligand>
</feature>
<feature type="binding site" evidence="1">
    <location>
        <position position="464"/>
    </location>
    <ligand>
        <name>Mg(2+)</name>
        <dbReference type="ChEBI" id="CHEBI:18420"/>
    </ligand>
</feature>
<feature type="binding site" evidence="1">
    <location>
        <position position="491"/>
    </location>
    <ligand>
        <name>Mg(2+)</name>
        <dbReference type="ChEBI" id="CHEBI:18420"/>
    </ligand>
</feature>
<feature type="binding site" evidence="1">
    <location>
        <position position="493"/>
    </location>
    <ligand>
        <name>Mg(2+)</name>
        <dbReference type="ChEBI" id="CHEBI:18420"/>
    </ligand>
</feature>
<feature type="binding site" evidence="1">
    <location>
        <position position="497"/>
    </location>
    <ligand>
        <name>substrate</name>
    </ligand>
</feature>
<reference key="1">
    <citation type="journal article" date="1994" name="Plant Physiol.">
        <title>Nucleotide sequence of a rice genomic pyruvate decarboxylase gene that lacks introns: a pseudo-gene?</title>
        <authorList>
            <person name="Hossain M.A."/>
            <person name="McGee J.D."/>
            <person name="Grover A."/>
            <person name="Dennis E."/>
            <person name="Peacock W.J."/>
            <person name="Hodges T.K."/>
        </authorList>
    </citation>
    <scope>NUCLEOTIDE SEQUENCE [GENOMIC DNA]</scope>
    <source>
        <strain>cv. IR54</strain>
        <tissue>Callus</tissue>
    </source>
</reference>
<reference key="2">
    <citation type="journal article" date="2005" name="PLoS Biol.">
        <title>The genomes of Oryza sativa: a history of duplications.</title>
        <authorList>
            <person name="Yu J."/>
            <person name="Wang J."/>
            <person name="Lin W."/>
            <person name="Li S."/>
            <person name="Li H."/>
            <person name="Zhou J."/>
            <person name="Ni P."/>
            <person name="Dong W."/>
            <person name="Hu S."/>
            <person name="Zeng C."/>
            <person name="Zhang J."/>
            <person name="Zhang Y."/>
            <person name="Li R."/>
            <person name="Xu Z."/>
            <person name="Li S."/>
            <person name="Li X."/>
            <person name="Zheng H."/>
            <person name="Cong L."/>
            <person name="Lin L."/>
            <person name="Yin J."/>
            <person name="Geng J."/>
            <person name="Li G."/>
            <person name="Shi J."/>
            <person name="Liu J."/>
            <person name="Lv H."/>
            <person name="Li J."/>
            <person name="Wang J."/>
            <person name="Deng Y."/>
            <person name="Ran L."/>
            <person name="Shi X."/>
            <person name="Wang X."/>
            <person name="Wu Q."/>
            <person name="Li C."/>
            <person name="Ren X."/>
            <person name="Wang J."/>
            <person name="Wang X."/>
            <person name="Li D."/>
            <person name="Liu D."/>
            <person name="Zhang X."/>
            <person name="Ji Z."/>
            <person name="Zhao W."/>
            <person name="Sun Y."/>
            <person name="Zhang Z."/>
            <person name="Bao J."/>
            <person name="Han Y."/>
            <person name="Dong L."/>
            <person name="Ji J."/>
            <person name="Chen P."/>
            <person name="Wu S."/>
            <person name="Liu J."/>
            <person name="Xiao Y."/>
            <person name="Bu D."/>
            <person name="Tan J."/>
            <person name="Yang L."/>
            <person name="Ye C."/>
            <person name="Zhang J."/>
            <person name="Xu J."/>
            <person name="Zhou Y."/>
            <person name="Yu Y."/>
            <person name="Zhang B."/>
            <person name="Zhuang S."/>
            <person name="Wei H."/>
            <person name="Liu B."/>
            <person name="Lei M."/>
            <person name="Yu H."/>
            <person name="Li Y."/>
            <person name="Xu H."/>
            <person name="Wei S."/>
            <person name="He X."/>
            <person name="Fang L."/>
            <person name="Zhang Z."/>
            <person name="Zhang Y."/>
            <person name="Huang X."/>
            <person name="Su Z."/>
            <person name="Tong W."/>
            <person name="Li J."/>
            <person name="Tong Z."/>
            <person name="Li S."/>
            <person name="Ye J."/>
            <person name="Wang L."/>
            <person name="Fang L."/>
            <person name="Lei T."/>
            <person name="Chen C.-S."/>
            <person name="Chen H.-C."/>
            <person name="Xu Z."/>
            <person name="Li H."/>
            <person name="Huang H."/>
            <person name="Zhang F."/>
            <person name="Xu H."/>
            <person name="Li N."/>
            <person name="Zhao C."/>
            <person name="Li S."/>
            <person name="Dong L."/>
            <person name="Huang Y."/>
            <person name="Li L."/>
            <person name="Xi Y."/>
            <person name="Qi Q."/>
            <person name="Li W."/>
            <person name="Zhang B."/>
            <person name="Hu W."/>
            <person name="Zhang Y."/>
            <person name="Tian X."/>
            <person name="Jiao Y."/>
            <person name="Liang X."/>
            <person name="Jin J."/>
            <person name="Gao L."/>
            <person name="Zheng W."/>
            <person name="Hao B."/>
            <person name="Liu S.-M."/>
            <person name="Wang W."/>
            <person name="Yuan L."/>
            <person name="Cao M."/>
            <person name="McDermott J."/>
            <person name="Samudrala R."/>
            <person name="Wang J."/>
            <person name="Wong G.K.-S."/>
            <person name="Yang H."/>
        </authorList>
    </citation>
    <scope>NUCLEOTIDE SEQUENCE [LARGE SCALE GENOMIC DNA]</scope>
    <source>
        <strain>cv. 93-11</strain>
    </source>
</reference>